<gene>
    <name evidence="1" type="primary">gcvH</name>
    <name type="ordered locus">BF4363</name>
</gene>
<evidence type="ECO:0000255" key="1">
    <source>
        <dbReference type="HAMAP-Rule" id="MF_00272"/>
    </source>
</evidence>
<evidence type="ECO:0000255" key="2">
    <source>
        <dbReference type="PROSITE-ProRule" id="PRU01066"/>
    </source>
</evidence>
<keyword id="KW-0450">Lipoyl</keyword>
<accession>Q64N36</accession>
<organism>
    <name type="scientific">Bacteroides fragilis (strain YCH46)</name>
    <dbReference type="NCBI Taxonomy" id="295405"/>
    <lineage>
        <taxon>Bacteria</taxon>
        <taxon>Pseudomonadati</taxon>
        <taxon>Bacteroidota</taxon>
        <taxon>Bacteroidia</taxon>
        <taxon>Bacteroidales</taxon>
        <taxon>Bacteroidaceae</taxon>
        <taxon>Bacteroides</taxon>
    </lineage>
</organism>
<name>GCSH_BACFR</name>
<feature type="chain" id="PRO_0000302351" description="Glycine cleavage system H protein">
    <location>
        <begin position="1"/>
        <end position="126"/>
    </location>
</feature>
<feature type="domain" description="Lipoyl-binding" evidence="2">
    <location>
        <begin position="22"/>
        <end position="104"/>
    </location>
</feature>
<feature type="modified residue" description="N6-lipoyllysine" evidence="1">
    <location>
        <position position="63"/>
    </location>
</feature>
<dbReference type="EMBL" id="AP006841">
    <property type="protein sequence ID" value="BAD51101.1"/>
    <property type="molecule type" value="Genomic_DNA"/>
</dbReference>
<dbReference type="RefSeq" id="WP_011203673.1">
    <property type="nucleotide sequence ID" value="NC_006347.1"/>
</dbReference>
<dbReference type="RefSeq" id="YP_101635.1">
    <property type="nucleotide sequence ID" value="NC_006347.1"/>
</dbReference>
<dbReference type="SMR" id="Q64N36"/>
<dbReference type="STRING" id="295405.BF4363"/>
<dbReference type="KEGG" id="bfr:BF4363"/>
<dbReference type="PATRIC" id="fig|295405.11.peg.4204"/>
<dbReference type="HOGENOM" id="CLU_097408_2_2_10"/>
<dbReference type="OrthoDB" id="9796712at2"/>
<dbReference type="Proteomes" id="UP000002197">
    <property type="component" value="Chromosome"/>
</dbReference>
<dbReference type="GO" id="GO:0005829">
    <property type="term" value="C:cytosol"/>
    <property type="evidence" value="ECO:0007669"/>
    <property type="project" value="TreeGrafter"/>
</dbReference>
<dbReference type="GO" id="GO:0005960">
    <property type="term" value="C:glycine cleavage complex"/>
    <property type="evidence" value="ECO:0007669"/>
    <property type="project" value="InterPro"/>
</dbReference>
<dbReference type="GO" id="GO:0019464">
    <property type="term" value="P:glycine decarboxylation via glycine cleavage system"/>
    <property type="evidence" value="ECO:0007669"/>
    <property type="project" value="UniProtKB-UniRule"/>
</dbReference>
<dbReference type="CDD" id="cd06848">
    <property type="entry name" value="GCS_H"/>
    <property type="match status" value="1"/>
</dbReference>
<dbReference type="Gene3D" id="2.40.50.100">
    <property type="match status" value="1"/>
</dbReference>
<dbReference type="HAMAP" id="MF_00272">
    <property type="entry name" value="GcvH"/>
    <property type="match status" value="1"/>
</dbReference>
<dbReference type="InterPro" id="IPR003016">
    <property type="entry name" value="2-oxoA_DH_lipoyl-BS"/>
</dbReference>
<dbReference type="InterPro" id="IPR000089">
    <property type="entry name" value="Biotin_lipoyl"/>
</dbReference>
<dbReference type="InterPro" id="IPR002930">
    <property type="entry name" value="GCV_H"/>
</dbReference>
<dbReference type="InterPro" id="IPR033753">
    <property type="entry name" value="GCV_H/Fam206"/>
</dbReference>
<dbReference type="InterPro" id="IPR017453">
    <property type="entry name" value="GCV_H_sub"/>
</dbReference>
<dbReference type="InterPro" id="IPR011053">
    <property type="entry name" value="Single_hybrid_motif"/>
</dbReference>
<dbReference type="NCBIfam" id="TIGR00527">
    <property type="entry name" value="gcvH"/>
    <property type="match status" value="1"/>
</dbReference>
<dbReference type="NCBIfam" id="NF002270">
    <property type="entry name" value="PRK01202.1"/>
    <property type="match status" value="1"/>
</dbReference>
<dbReference type="PANTHER" id="PTHR11715">
    <property type="entry name" value="GLYCINE CLEAVAGE SYSTEM H PROTEIN"/>
    <property type="match status" value="1"/>
</dbReference>
<dbReference type="PANTHER" id="PTHR11715:SF3">
    <property type="entry name" value="GLYCINE CLEAVAGE SYSTEM H PROTEIN-RELATED"/>
    <property type="match status" value="1"/>
</dbReference>
<dbReference type="Pfam" id="PF01597">
    <property type="entry name" value="GCV_H"/>
    <property type="match status" value="1"/>
</dbReference>
<dbReference type="SUPFAM" id="SSF51230">
    <property type="entry name" value="Single hybrid motif"/>
    <property type="match status" value="1"/>
</dbReference>
<dbReference type="PROSITE" id="PS50968">
    <property type="entry name" value="BIOTINYL_LIPOYL"/>
    <property type="match status" value="1"/>
</dbReference>
<dbReference type="PROSITE" id="PS00189">
    <property type="entry name" value="LIPOYL"/>
    <property type="match status" value="1"/>
</dbReference>
<comment type="function">
    <text evidence="1">The glycine cleavage system catalyzes the degradation of glycine. The H protein shuttles the methylamine group of glycine from the P protein to the T protein.</text>
</comment>
<comment type="cofactor">
    <cofactor evidence="1">
        <name>(R)-lipoate</name>
        <dbReference type="ChEBI" id="CHEBI:83088"/>
    </cofactor>
    <text evidence="1">Binds 1 lipoyl cofactor covalently.</text>
</comment>
<comment type="subunit">
    <text evidence="1">The glycine cleavage system is composed of four proteins: P, T, L and H.</text>
</comment>
<comment type="similarity">
    <text evidence="1">Belongs to the GcvH family.</text>
</comment>
<proteinExistence type="inferred from homology"/>
<sequence length="126" mass="13984">MNFPQNVKYTNEHEWIRLEGDVAYVGITDYAQEQLGDIVFVDIPTEGETLEAEEVFGTIEVVKTISDLFLPVAGEVVEQNPALEENPELVNKDPYGEGWLIKMKPANAADLDNLLDAEGYKAVVNA</sequence>
<reference key="1">
    <citation type="journal article" date="2004" name="Proc. Natl. Acad. Sci. U.S.A.">
        <title>Genomic analysis of Bacteroides fragilis reveals extensive DNA inversions regulating cell surface adaptation.</title>
        <authorList>
            <person name="Kuwahara T."/>
            <person name="Yamashita A."/>
            <person name="Hirakawa H."/>
            <person name="Nakayama H."/>
            <person name="Toh H."/>
            <person name="Okada N."/>
            <person name="Kuhara S."/>
            <person name="Hattori M."/>
            <person name="Hayashi T."/>
            <person name="Ohnishi Y."/>
        </authorList>
    </citation>
    <scope>NUCLEOTIDE SEQUENCE [LARGE SCALE GENOMIC DNA]</scope>
    <source>
        <strain>YCH46</strain>
    </source>
</reference>
<protein>
    <recommendedName>
        <fullName evidence="1">Glycine cleavage system H protein</fullName>
    </recommendedName>
</protein>